<organism>
    <name type="scientific">Ignicoccus hospitalis (strain KIN4/I / DSM 18386 / JCM 14125)</name>
    <dbReference type="NCBI Taxonomy" id="453591"/>
    <lineage>
        <taxon>Archaea</taxon>
        <taxon>Thermoproteota</taxon>
        <taxon>Thermoprotei</taxon>
        <taxon>Desulfurococcales</taxon>
        <taxon>Desulfurococcaceae</taxon>
        <taxon>Ignicoccus</taxon>
    </lineage>
</organism>
<accession>A8A9J7</accession>
<comment type="function">
    <text evidence="1">Prenyltransferase that catalyzes the transfer of the geranylgeranyl moiety of geranylgeranyl diphosphate (GGPP) to the C2 hydroxyl of (S)-3-O-geranylgeranylglyceryl phosphate (GGGP). This reaction is the second ether-bond-formation step in the biosynthesis of archaeal membrane lipids.</text>
</comment>
<comment type="catalytic activity">
    <reaction evidence="1">
        <text>sn-3-O-(geranylgeranyl)glycerol 1-phosphate + (2E,6E,10E)-geranylgeranyl diphosphate = 2,3-bis-O-(geranylgeranyl)-sn-glycerol 1-phosphate + diphosphate</text>
        <dbReference type="Rhea" id="RHEA:18109"/>
        <dbReference type="ChEBI" id="CHEBI:33019"/>
        <dbReference type="ChEBI" id="CHEBI:57677"/>
        <dbReference type="ChEBI" id="CHEBI:58756"/>
        <dbReference type="ChEBI" id="CHEBI:58837"/>
        <dbReference type="EC" id="2.5.1.42"/>
    </reaction>
</comment>
<comment type="cofactor">
    <cofactor evidence="1">
        <name>Mg(2+)</name>
        <dbReference type="ChEBI" id="CHEBI:18420"/>
    </cofactor>
</comment>
<comment type="pathway">
    <text evidence="1">Membrane lipid metabolism; glycerophospholipid metabolism.</text>
</comment>
<comment type="subcellular location">
    <subcellularLocation>
        <location evidence="1">Cell membrane</location>
        <topology evidence="1">Multi-pass membrane protein</topology>
    </subcellularLocation>
</comment>
<comment type="similarity">
    <text evidence="1">Belongs to the UbiA prenyltransferase family. DGGGP synthase subfamily.</text>
</comment>
<comment type="sequence caution" evidence="2">
    <conflict type="erroneous initiation">
        <sequence resource="EMBL-CDS" id="ABU81599"/>
    </conflict>
</comment>
<proteinExistence type="inferred from homology"/>
<evidence type="ECO:0000255" key="1">
    <source>
        <dbReference type="HAMAP-Rule" id="MF_01286"/>
    </source>
</evidence>
<evidence type="ECO:0000305" key="2"/>
<protein>
    <recommendedName>
        <fullName evidence="1">Digeranylgeranylglyceryl phosphate synthase</fullName>
        <shortName evidence="1">DGGGP synthase</shortName>
        <shortName evidence="1">DGGGPS</shortName>
        <ecNumber evidence="1">2.5.1.42</ecNumber>
    </recommendedName>
    <alternativeName>
        <fullName evidence="1">(S)-2,3-di-O-geranylgeranylglyceryl phosphate synthase</fullName>
    </alternativeName>
    <alternativeName>
        <fullName evidence="1">Geranylgeranylglycerol-phosphate geranylgeranyltransferase</fullName>
    </alternativeName>
</protein>
<keyword id="KW-1003">Cell membrane</keyword>
<keyword id="KW-0444">Lipid biosynthesis</keyword>
<keyword id="KW-0443">Lipid metabolism</keyword>
<keyword id="KW-0460">Magnesium</keyword>
<keyword id="KW-0472">Membrane</keyword>
<keyword id="KW-0594">Phospholipid biosynthesis</keyword>
<keyword id="KW-1208">Phospholipid metabolism</keyword>
<keyword id="KW-1185">Reference proteome</keyword>
<keyword id="KW-0808">Transferase</keyword>
<keyword id="KW-0812">Transmembrane</keyword>
<keyword id="KW-1133">Transmembrane helix</keyword>
<feature type="chain" id="PRO_0000350697" description="Digeranylgeranylglyceryl phosphate synthase">
    <location>
        <begin position="1"/>
        <end position="303"/>
    </location>
</feature>
<feature type="transmembrane region" description="Helical" evidence="1">
    <location>
        <begin position="23"/>
        <end position="43"/>
    </location>
</feature>
<feature type="transmembrane region" description="Helical" evidence="1">
    <location>
        <begin position="88"/>
        <end position="108"/>
    </location>
</feature>
<feature type="transmembrane region" description="Helical" evidence="1">
    <location>
        <begin position="130"/>
        <end position="150"/>
    </location>
</feature>
<feature type="transmembrane region" description="Helical" evidence="1">
    <location>
        <begin position="164"/>
        <end position="184"/>
    </location>
</feature>
<feature type="transmembrane region" description="Helical" evidence="1">
    <location>
        <begin position="206"/>
        <end position="228"/>
    </location>
</feature>
<feature type="transmembrane region" description="Helical" evidence="1">
    <location>
        <begin position="232"/>
        <end position="254"/>
    </location>
</feature>
<feature type="transmembrane region" description="Helical" evidence="1">
    <location>
        <begin position="272"/>
        <end position="292"/>
    </location>
</feature>
<dbReference type="EC" id="2.5.1.42" evidence="1"/>
<dbReference type="EMBL" id="CP000816">
    <property type="protein sequence ID" value="ABU81599.1"/>
    <property type="status" value="ALT_INIT"/>
    <property type="molecule type" value="Genomic_DNA"/>
</dbReference>
<dbReference type="RefSeq" id="WP_052569918.1">
    <property type="nucleotide sequence ID" value="NC_009776.1"/>
</dbReference>
<dbReference type="SMR" id="A8A9J7"/>
<dbReference type="STRING" id="453591.Igni_0416"/>
<dbReference type="GeneID" id="5563176"/>
<dbReference type="KEGG" id="iho:Igni_0416"/>
<dbReference type="eggNOG" id="arCOG00476">
    <property type="taxonomic scope" value="Archaea"/>
</dbReference>
<dbReference type="HOGENOM" id="CLU_073311_1_1_2"/>
<dbReference type="OrthoDB" id="19076at2157"/>
<dbReference type="UniPathway" id="UPA00940"/>
<dbReference type="Proteomes" id="UP000000262">
    <property type="component" value="Chromosome"/>
</dbReference>
<dbReference type="GO" id="GO:0005886">
    <property type="term" value="C:plasma membrane"/>
    <property type="evidence" value="ECO:0007669"/>
    <property type="project" value="UniProtKB-SubCell"/>
</dbReference>
<dbReference type="GO" id="GO:0047295">
    <property type="term" value="F:geranylgeranylglycerol-phosphate geranylgeranyltransferase activity"/>
    <property type="evidence" value="ECO:0007669"/>
    <property type="project" value="UniProtKB-UniRule"/>
</dbReference>
<dbReference type="GO" id="GO:0000287">
    <property type="term" value="F:magnesium ion binding"/>
    <property type="evidence" value="ECO:0007669"/>
    <property type="project" value="UniProtKB-UniRule"/>
</dbReference>
<dbReference type="GO" id="GO:0046474">
    <property type="term" value="P:glycerophospholipid biosynthetic process"/>
    <property type="evidence" value="ECO:0007669"/>
    <property type="project" value="UniProtKB-UniRule"/>
</dbReference>
<dbReference type="CDD" id="cd13961">
    <property type="entry name" value="PT_UbiA_DGGGPS"/>
    <property type="match status" value="1"/>
</dbReference>
<dbReference type="Gene3D" id="1.10.357.140">
    <property type="entry name" value="UbiA prenyltransferase"/>
    <property type="match status" value="1"/>
</dbReference>
<dbReference type="Gene3D" id="1.20.120.1780">
    <property type="entry name" value="UbiA prenyltransferase"/>
    <property type="match status" value="1"/>
</dbReference>
<dbReference type="HAMAP" id="MF_01286">
    <property type="entry name" value="DGGGP_synth"/>
    <property type="match status" value="1"/>
</dbReference>
<dbReference type="InterPro" id="IPR023547">
    <property type="entry name" value="DGGGP_synth"/>
</dbReference>
<dbReference type="InterPro" id="IPR050475">
    <property type="entry name" value="Prenyltransferase_related"/>
</dbReference>
<dbReference type="InterPro" id="IPR000537">
    <property type="entry name" value="UbiA_prenyltransferase"/>
</dbReference>
<dbReference type="InterPro" id="IPR044878">
    <property type="entry name" value="UbiA_sf"/>
</dbReference>
<dbReference type="PANTHER" id="PTHR42723">
    <property type="entry name" value="CHLOROPHYLL SYNTHASE"/>
    <property type="match status" value="1"/>
</dbReference>
<dbReference type="PANTHER" id="PTHR42723:SF1">
    <property type="entry name" value="CHLOROPHYLL SYNTHASE, CHLOROPLASTIC"/>
    <property type="match status" value="1"/>
</dbReference>
<dbReference type="Pfam" id="PF01040">
    <property type="entry name" value="UbiA"/>
    <property type="match status" value="1"/>
</dbReference>
<gene>
    <name type="ordered locus">Igni_0416</name>
</gene>
<reference key="1">
    <citation type="journal article" date="2008" name="Genome Biol.">
        <title>A genomic analysis of the archaeal system Ignicoccus hospitalis-Nanoarchaeum equitans.</title>
        <authorList>
            <person name="Podar M."/>
            <person name="Anderson I."/>
            <person name="Makarova K.S."/>
            <person name="Elkins J.G."/>
            <person name="Ivanova N."/>
            <person name="Wall M.A."/>
            <person name="Lykidis A."/>
            <person name="Mavromatis K."/>
            <person name="Sun H."/>
            <person name="Hudson M.E."/>
            <person name="Chen W."/>
            <person name="Deciu C."/>
            <person name="Hutchison D."/>
            <person name="Eads J.R."/>
            <person name="Anderson A."/>
            <person name="Fernandes F."/>
            <person name="Szeto E."/>
            <person name="Lapidus A."/>
            <person name="Kyrpides N.C."/>
            <person name="Saier M.H. Jr."/>
            <person name="Richardson P.M."/>
            <person name="Rachel R."/>
            <person name="Huber H."/>
            <person name="Eisen J.A."/>
            <person name="Koonin E.V."/>
            <person name="Keller M."/>
            <person name="Stetter K.O."/>
        </authorList>
    </citation>
    <scope>NUCLEOTIDE SEQUENCE [LARGE SCALE GENOMIC DNA]</scope>
    <source>
        <strain>KIN4/I / DSM 18386 / JCM 14125</strain>
    </source>
</reference>
<name>DGGGP_IGNH4</name>
<sequence>MEASGKLRAYLELVRAHNLLGTVLGVIAGAALLGEVNVAAAIASASAAAVAAGGYAINDYFDVEIDKVNKPERPIPSGRVGAEEARKLALALLALGPLLGLAVGPLTGAYAALNAVLMYYYSKSLKKTGLPGNLAVSFSTASTLLYGSLATAEWAGEVARVLRTIPIILMVFLMTLAREVVKGVEDYVGDKEGGVKTLAVVKGPDFALRAALALACASLALAYLAAPLLSLGYAFLAFVTLGGLLSLASVAACLRSEDPVRCAAKPRRAMKVAMFLGLIGILVDRLVQPVFYPHVLHAGGEEG</sequence>